<protein>
    <recommendedName>
        <fullName>Small, acid-soluble spore protein A</fullName>
        <shortName>SASP</shortName>
    </recommendedName>
</protein>
<keyword id="KW-0238">DNA-binding</keyword>
<keyword id="KW-1185">Reference proteome</keyword>
<keyword id="KW-0749">Sporulation</keyword>
<name>SSPA_BACSU</name>
<reference key="1">
    <citation type="journal article" date="1986" name="J. Bacteriol.">
        <title>Cloning and nucleotide sequencing of genes for three small, acid-soluble proteins from Bacillus subtilis spores.</title>
        <authorList>
            <person name="Connors M.J."/>
            <person name="Mason J.M."/>
            <person name="Setlow P."/>
        </authorList>
    </citation>
    <scope>NUCLEOTIDE SEQUENCE [GENOMIC DNA]</scope>
</reference>
<reference key="2">
    <citation type="journal article" date="1997" name="Microbiology">
        <title>Sequencing and functional annotation of the Bacillus subtilis genes in the 200 kb rrnB-dnaB region.</title>
        <authorList>
            <person name="Lapidus A."/>
            <person name="Galleron N."/>
            <person name="Sorokin A."/>
            <person name="Ehrlich S.D."/>
        </authorList>
    </citation>
    <scope>NUCLEOTIDE SEQUENCE [GENOMIC DNA]</scope>
    <source>
        <strain>168</strain>
    </source>
</reference>
<reference key="3">
    <citation type="journal article" date="1997" name="Nature">
        <title>The complete genome sequence of the Gram-positive bacterium Bacillus subtilis.</title>
        <authorList>
            <person name="Kunst F."/>
            <person name="Ogasawara N."/>
            <person name="Moszer I."/>
            <person name="Albertini A.M."/>
            <person name="Alloni G."/>
            <person name="Azevedo V."/>
            <person name="Bertero M.G."/>
            <person name="Bessieres P."/>
            <person name="Bolotin A."/>
            <person name="Borchert S."/>
            <person name="Borriss R."/>
            <person name="Boursier L."/>
            <person name="Brans A."/>
            <person name="Braun M."/>
            <person name="Brignell S.C."/>
            <person name="Bron S."/>
            <person name="Brouillet S."/>
            <person name="Bruschi C.V."/>
            <person name="Caldwell B."/>
            <person name="Capuano V."/>
            <person name="Carter N.M."/>
            <person name="Choi S.-K."/>
            <person name="Codani J.-J."/>
            <person name="Connerton I.F."/>
            <person name="Cummings N.J."/>
            <person name="Daniel R.A."/>
            <person name="Denizot F."/>
            <person name="Devine K.M."/>
            <person name="Duesterhoeft A."/>
            <person name="Ehrlich S.D."/>
            <person name="Emmerson P.T."/>
            <person name="Entian K.-D."/>
            <person name="Errington J."/>
            <person name="Fabret C."/>
            <person name="Ferrari E."/>
            <person name="Foulger D."/>
            <person name="Fritz C."/>
            <person name="Fujita M."/>
            <person name="Fujita Y."/>
            <person name="Fuma S."/>
            <person name="Galizzi A."/>
            <person name="Galleron N."/>
            <person name="Ghim S.-Y."/>
            <person name="Glaser P."/>
            <person name="Goffeau A."/>
            <person name="Golightly E.J."/>
            <person name="Grandi G."/>
            <person name="Guiseppi G."/>
            <person name="Guy B.J."/>
            <person name="Haga K."/>
            <person name="Haiech J."/>
            <person name="Harwood C.R."/>
            <person name="Henaut A."/>
            <person name="Hilbert H."/>
            <person name="Holsappel S."/>
            <person name="Hosono S."/>
            <person name="Hullo M.-F."/>
            <person name="Itaya M."/>
            <person name="Jones L.-M."/>
            <person name="Joris B."/>
            <person name="Karamata D."/>
            <person name="Kasahara Y."/>
            <person name="Klaerr-Blanchard M."/>
            <person name="Klein C."/>
            <person name="Kobayashi Y."/>
            <person name="Koetter P."/>
            <person name="Koningstein G."/>
            <person name="Krogh S."/>
            <person name="Kumano M."/>
            <person name="Kurita K."/>
            <person name="Lapidus A."/>
            <person name="Lardinois S."/>
            <person name="Lauber J."/>
            <person name="Lazarevic V."/>
            <person name="Lee S.-M."/>
            <person name="Levine A."/>
            <person name="Liu H."/>
            <person name="Masuda S."/>
            <person name="Mauel C."/>
            <person name="Medigue C."/>
            <person name="Medina N."/>
            <person name="Mellado R.P."/>
            <person name="Mizuno M."/>
            <person name="Moestl D."/>
            <person name="Nakai S."/>
            <person name="Noback M."/>
            <person name="Noone D."/>
            <person name="O'Reilly M."/>
            <person name="Ogawa K."/>
            <person name="Ogiwara A."/>
            <person name="Oudega B."/>
            <person name="Park S.-H."/>
            <person name="Parro V."/>
            <person name="Pohl T.M."/>
            <person name="Portetelle D."/>
            <person name="Porwollik S."/>
            <person name="Prescott A.M."/>
            <person name="Presecan E."/>
            <person name="Pujic P."/>
            <person name="Purnelle B."/>
            <person name="Rapoport G."/>
            <person name="Rey M."/>
            <person name="Reynolds S."/>
            <person name="Rieger M."/>
            <person name="Rivolta C."/>
            <person name="Rocha E."/>
            <person name="Roche B."/>
            <person name="Rose M."/>
            <person name="Sadaie Y."/>
            <person name="Sato T."/>
            <person name="Scanlan E."/>
            <person name="Schleich S."/>
            <person name="Schroeter R."/>
            <person name="Scoffone F."/>
            <person name="Sekiguchi J."/>
            <person name="Sekowska A."/>
            <person name="Seror S.J."/>
            <person name="Serror P."/>
            <person name="Shin B.-S."/>
            <person name="Soldo B."/>
            <person name="Sorokin A."/>
            <person name="Tacconi E."/>
            <person name="Takagi T."/>
            <person name="Takahashi H."/>
            <person name="Takemaru K."/>
            <person name="Takeuchi M."/>
            <person name="Tamakoshi A."/>
            <person name="Tanaka T."/>
            <person name="Terpstra P."/>
            <person name="Tognoni A."/>
            <person name="Tosato V."/>
            <person name="Uchiyama S."/>
            <person name="Vandenbol M."/>
            <person name="Vannier F."/>
            <person name="Vassarotti A."/>
            <person name="Viari A."/>
            <person name="Wambutt R."/>
            <person name="Wedler E."/>
            <person name="Wedler H."/>
            <person name="Weitzenegger T."/>
            <person name="Winters P."/>
            <person name="Wipat A."/>
            <person name="Yamamoto H."/>
            <person name="Yamane K."/>
            <person name="Yasumoto K."/>
            <person name="Yata K."/>
            <person name="Yoshida K."/>
            <person name="Yoshikawa H.-F."/>
            <person name="Zumstein E."/>
            <person name="Yoshikawa H."/>
            <person name="Danchin A."/>
        </authorList>
    </citation>
    <scope>NUCLEOTIDE SEQUENCE [LARGE SCALE GENOMIC DNA]</scope>
    <source>
        <strain>168</strain>
    </source>
</reference>
<accession>P04831</accession>
<comment type="function">
    <text>SASP are bound to spore DNA. They are double-stranded DNA-binding proteins that cause DNA to change to an a-like conformation. They protect the DNA backbone from chemical and enzymatic cleavage and are thus involved in dormant spore's high resistance to UV light.</text>
</comment>
<comment type="miscellaneous">
    <text>SASP are degraded in the first minutes of spore germination and provide amino acids for both new protein synthesis and metabolism.</text>
</comment>
<comment type="similarity">
    <text evidence="1">Belongs to the alpha/beta-type SASP family.</text>
</comment>
<gene>
    <name type="primary">sspA</name>
    <name type="ordered locus">BSU29570</name>
</gene>
<organism>
    <name type="scientific">Bacillus subtilis (strain 168)</name>
    <dbReference type="NCBI Taxonomy" id="224308"/>
    <lineage>
        <taxon>Bacteria</taxon>
        <taxon>Bacillati</taxon>
        <taxon>Bacillota</taxon>
        <taxon>Bacilli</taxon>
        <taxon>Bacillales</taxon>
        <taxon>Bacillaceae</taxon>
        <taxon>Bacillus</taxon>
    </lineage>
</organism>
<dbReference type="EMBL" id="M12620">
    <property type="protein sequence ID" value="AAA22833.1"/>
    <property type="molecule type" value="Genomic_DNA"/>
</dbReference>
<dbReference type="EMBL" id="AF008220">
    <property type="protein sequence ID" value="AAC00309.1"/>
    <property type="molecule type" value="Genomic_DNA"/>
</dbReference>
<dbReference type="EMBL" id="AL009126">
    <property type="protein sequence ID" value="CAB14935.1"/>
    <property type="molecule type" value="Genomic_DNA"/>
</dbReference>
<dbReference type="PIR" id="A24546">
    <property type="entry name" value="A24546"/>
</dbReference>
<dbReference type="RefSeq" id="NP_390835.1">
    <property type="nucleotide sequence ID" value="NC_000964.3"/>
</dbReference>
<dbReference type="RefSeq" id="WP_003223491.1">
    <property type="nucleotide sequence ID" value="NZ_OZ025638.1"/>
</dbReference>
<dbReference type="SMR" id="P04831"/>
<dbReference type="FunCoup" id="P04831">
    <property type="interactions" value="80"/>
</dbReference>
<dbReference type="STRING" id="224308.BSU29570"/>
<dbReference type="PaxDb" id="224308-BSU29570"/>
<dbReference type="EnsemblBacteria" id="CAB14935">
    <property type="protein sequence ID" value="CAB14935"/>
    <property type="gene ID" value="BSU_29570"/>
</dbReference>
<dbReference type="GeneID" id="86872536"/>
<dbReference type="GeneID" id="937338"/>
<dbReference type="KEGG" id="bsu:BSU29570"/>
<dbReference type="PATRIC" id="fig|224308.179.peg.3213"/>
<dbReference type="eggNOG" id="ENOG5032YCI">
    <property type="taxonomic scope" value="Bacteria"/>
</dbReference>
<dbReference type="InParanoid" id="P04831"/>
<dbReference type="OrthoDB" id="2939151at2"/>
<dbReference type="PhylomeDB" id="P04831"/>
<dbReference type="BioCyc" id="BSUB:BSU29570-MONOMER"/>
<dbReference type="Proteomes" id="UP000001570">
    <property type="component" value="Chromosome"/>
</dbReference>
<dbReference type="GO" id="GO:0003690">
    <property type="term" value="F:double-stranded DNA binding"/>
    <property type="evidence" value="ECO:0007669"/>
    <property type="project" value="InterPro"/>
</dbReference>
<dbReference type="GO" id="GO:0006265">
    <property type="term" value="P:DNA topological change"/>
    <property type="evidence" value="ECO:0007669"/>
    <property type="project" value="InterPro"/>
</dbReference>
<dbReference type="GO" id="GO:0030435">
    <property type="term" value="P:sporulation resulting in formation of a cellular spore"/>
    <property type="evidence" value="ECO:0007669"/>
    <property type="project" value="UniProtKB-KW"/>
</dbReference>
<dbReference type="Gene3D" id="6.10.10.80">
    <property type="entry name" value="Small, acid-soluble spore protein, alpha/beta type-like"/>
    <property type="match status" value="1"/>
</dbReference>
<dbReference type="InterPro" id="IPR001448">
    <property type="entry name" value="SASP_alpha/beta-type"/>
</dbReference>
<dbReference type="InterPro" id="IPR018126">
    <property type="entry name" value="SASP_alpha/beta-type_CS"/>
</dbReference>
<dbReference type="InterPro" id="IPR050847">
    <property type="entry name" value="SASP_DNA-binding"/>
</dbReference>
<dbReference type="InterPro" id="IPR038300">
    <property type="entry name" value="SASP_sf_alpha/beta"/>
</dbReference>
<dbReference type="PANTHER" id="PTHR36107">
    <property type="entry name" value="SMALL, ACID-SOLUBLE SPORE PROTEIN A"/>
    <property type="match status" value="1"/>
</dbReference>
<dbReference type="PANTHER" id="PTHR36107:SF1">
    <property type="entry name" value="SMALL, ACID-SOLUBLE SPORE PROTEIN A"/>
    <property type="match status" value="1"/>
</dbReference>
<dbReference type="Pfam" id="PF00269">
    <property type="entry name" value="SASP"/>
    <property type="match status" value="1"/>
</dbReference>
<dbReference type="PROSITE" id="PS00304">
    <property type="entry name" value="SASP_1"/>
    <property type="match status" value="1"/>
</dbReference>
<dbReference type="PROSITE" id="PS00684">
    <property type="entry name" value="SASP_2"/>
    <property type="match status" value="1"/>
</dbReference>
<proteinExistence type="inferred from homology"/>
<evidence type="ECO:0000305" key="1"/>
<feature type="chain" id="PRO_0000196299" description="Small, acid-soluble spore protein A">
    <location>
        <begin position="1"/>
        <end position="69"/>
    </location>
</feature>
<feature type="site" description="Cleavage; by spore protease">
    <location>
        <begin position="27"/>
        <end position="28"/>
    </location>
</feature>
<sequence>MANNNSGNSNNLLVPGAAQAIDQMKLEIASEFGVNLGADTTSRANGSVGGEITKRLVSFAQQNMGGGQF</sequence>